<reference key="1">
    <citation type="journal article" date="2004" name="Proc. Natl. Acad. Sci. U.S.A.">
        <title>Complete genomes of two clinical Staphylococcus aureus strains: evidence for the rapid evolution of virulence and drug resistance.</title>
        <authorList>
            <person name="Holden M.T.G."/>
            <person name="Feil E.J."/>
            <person name="Lindsay J.A."/>
            <person name="Peacock S.J."/>
            <person name="Day N.P.J."/>
            <person name="Enright M.C."/>
            <person name="Foster T.J."/>
            <person name="Moore C.E."/>
            <person name="Hurst L."/>
            <person name="Atkin R."/>
            <person name="Barron A."/>
            <person name="Bason N."/>
            <person name="Bentley S.D."/>
            <person name="Chillingworth C."/>
            <person name="Chillingworth T."/>
            <person name="Churcher C."/>
            <person name="Clark L."/>
            <person name="Corton C."/>
            <person name="Cronin A."/>
            <person name="Doggett J."/>
            <person name="Dowd L."/>
            <person name="Feltwell T."/>
            <person name="Hance Z."/>
            <person name="Harris B."/>
            <person name="Hauser H."/>
            <person name="Holroyd S."/>
            <person name="Jagels K."/>
            <person name="James K.D."/>
            <person name="Lennard N."/>
            <person name="Line A."/>
            <person name="Mayes R."/>
            <person name="Moule S."/>
            <person name="Mungall K."/>
            <person name="Ormond D."/>
            <person name="Quail M.A."/>
            <person name="Rabbinowitsch E."/>
            <person name="Rutherford K.M."/>
            <person name="Sanders M."/>
            <person name="Sharp S."/>
            <person name="Simmonds M."/>
            <person name="Stevens K."/>
            <person name="Whitehead S."/>
            <person name="Barrell B.G."/>
            <person name="Spratt B.G."/>
            <person name="Parkhill J."/>
        </authorList>
    </citation>
    <scope>NUCLEOTIDE SEQUENCE [LARGE SCALE GENOMIC DNA]</scope>
    <source>
        <strain>MSSA476</strain>
    </source>
</reference>
<accession>Q6GD09</accession>
<gene>
    <name type="primary">sbnA</name>
    <name type="ordered locus">SAS0090</name>
</gene>
<comment type="function">
    <text evidence="1">Catalyzes the synthesis of N-((2S)-2-amino-2-carboxyethyl)-L-glutamate (ACEGA) from O-phospho-L-serine and L-glutamate. Involved in the biosynthesis of L-2,3-diaminopropionic acid (L-Dap), a precursor of staphyloferrin B and antibiotics.</text>
</comment>
<comment type="catalytic activity">
    <reaction evidence="1">
        <text>O-phospho-L-serine + L-glutamate = N-[(2S)-2-amino-2-carboxyethyl]-L-glutamate + phosphate + H(+)</text>
        <dbReference type="Rhea" id="RHEA:52384"/>
        <dbReference type="ChEBI" id="CHEBI:15378"/>
        <dbReference type="ChEBI" id="CHEBI:29985"/>
        <dbReference type="ChEBI" id="CHEBI:43474"/>
        <dbReference type="ChEBI" id="CHEBI:57524"/>
        <dbReference type="ChEBI" id="CHEBI:134610"/>
        <dbReference type="EC" id="2.5.1.140"/>
    </reaction>
</comment>
<comment type="cofactor">
    <cofactor evidence="1">
        <name>pyridoxal 5'-phosphate</name>
        <dbReference type="ChEBI" id="CHEBI:597326"/>
    </cofactor>
</comment>
<comment type="pathway">
    <text evidence="1">Siderophore biosynthesis.</text>
</comment>
<comment type="subunit">
    <text evidence="1">Homodimer.</text>
</comment>
<comment type="induction">
    <text evidence="2">Up-regulated under iron-deficient growth conditions. Repressed by Fur under iron-rich growth conditions.</text>
</comment>
<comment type="similarity">
    <text evidence="3">Belongs to the cysteine synthase/cystathionine beta-synthase family. SbnA subfamily.</text>
</comment>
<dbReference type="EC" id="2.5.1.140" evidence="1"/>
<dbReference type="EMBL" id="BX571857">
    <property type="protein sequence ID" value="CAG41857.1"/>
    <property type="molecule type" value="Genomic_DNA"/>
</dbReference>
<dbReference type="RefSeq" id="WP_000570808.1">
    <property type="nucleotide sequence ID" value="NC_002953.3"/>
</dbReference>
<dbReference type="SMR" id="Q6GD09"/>
<dbReference type="KEGG" id="sas:SAS0090"/>
<dbReference type="HOGENOM" id="CLU_021018_1_0_9"/>
<dbReference type="GO" id="GO:0016765">
    <property type="term" value="F:transferase activity, transferring alkyl or aryl (other than methyl) groups"/>
    <property type="evidence" value="ECO:0007669"/>
    <property type="project" value="UniProtKB-ARBA"/>
</dbReference>
<dbReference type="GO" id="GO:0006535">
    <property type="term" value="P:cysteine biosynthetic process from serine"/>
    <property type="evidence" value="ECO:0007669"/>
    <property type="project" value="InterPro"/>
</dbReference>
<dbReference type="CDD" id="cd01561">
    <property type="entry name" value="CBS_like"/>
    <property type="match status" value="1"/>
</dbReference>
<dbReference type="Gene3D" id="3.40.50.1100">
    <property type="match status" value="2"/>
</dbReference>
<dbReference type="InterPro" id="IPR050214">
    <property type="entry name" value="Cys_Synth/Cystath_Beta-Synth"/>
</dbReference>
<dbReference type="InterPro" id="IPR001216">
    <property type="entry name" value="P-phosphate_BS"/>
</dbReference>
<dbReference type="InterPro" id="IPR023927">
    <property type="entry name" value="SbnA"/>
</dbReference>
<dbReference type="InterPro" id="IPR001926">
    <property type="entry name" value="TrpB-like_PALP"/>
</dbReference>
<dbReference type="InterPro" id="IPR036052">
    <property type="entry name" value="TrpB-like_PALP_sf"/>
</dbReference>
<dbReference type="NCBIfam" id="TIGR03945">
    <property type="entry name" value="PLP_SbnA_fam"/>
    <property type="match status" value="1"/>
</dbReference>
<dbReference type="PANTHER" id="PTHR10314">
    <property type="entry name" value="CYSTATHIONINE BETA-SYNTHASE"/>
    <property type="match status" value="1"/>
</dbReference>
<dbReference type="Pfam" id="PF00291">
    <property type="entry name" value="PALP"/>
    <property type="match status" value="1"/>
</dbReference>
<dbReference type="SUPFAM" id="SSF53686">
    <property type="entry name" value="Tryptophan synthase beta subunit-like PLP-dependent enzymes"/>
    <property type="match status" value="1"/>
</dbReference>
<dbReference type="PROSITE" id="PS00901">
    <property type="entry name" value="CYS_SYNTHASE"/>
    <property type="match status" value="1"/>
</dbReference>
<evidence type="ECO:0000250" key="1">
    <source>
        <dbReference type="UniProtKB" id="A6QDA0"/>
    </source>
</evidence>
<evidence type="ECO:0000250" key="2">
    <source>
        <dbReference type="UniProtKB" id="Q2G1N3"/>
    </source>
</evidence>
<evidence type="ECO:0000305" key="3"/>
<name>SBNA_STAAS</name>
<organism>
    <name type="scientific">Staphylococcus aureus (strain MSSA476)</name>
    <dbReference type="NCBI Taxonomy" id="282459"/>
    <lineage>
        <taxon>Bacteria</taxon>
        <taxon>Bacillati</taxon>
        <taxon>Bacillota</taxon>
        <taxon>Bacilli</taxon>
        <taxon>Bacillales</taxon>
        <taxon>Staphylococcaceae</taxon>
        <taxon>Staphylococcus</taxon>
    </lineage>
</organism>
<feature type="chain" id="PRO_0000395018" description="N-(2-amino-2-carboxyethyl)-L-glutamate synthase">
    <location>
        <begin position="1"/>
        <end position="326"/>
    </location>
</feature>
<feature type="binding site" evidence="1">
    <location>
        <position position="77"/>
    </location>
    <ligand>
        <name>pyridoxal 5'-phosphate</name>
        <dbReference type="ChEBI" id="CHEBI:597326"/>
    </ligand>
</feature>
<feature type="binding site" evidence="1">
    <location>
        <begin position="185"/>
        <end position="189"/>
    </location>
    <ligand>
        <name>pyridoxal 5'-phosphate</name>
        <dbReference type="ChEBI" id="CHEBI:597326"/>
    </ligand>
</feature>
<feature type="binding site" evidence="1">
    <location>
        <position position="272"/>
    </location>
    <ligand>
        <name>pyridoxal 5'-phosphate</name>
        <dbReference type="ChEBI" id="CHEBI:597326"/>
    </ligand>
</feature>
<feature type="modified residue" description="N6-(pyridoxal phosphate)lysine" evidence="1">
    <location>
        <position position="47"/>
    </location>
</feature>
<protein>
    <recommendedName>
        <fullName evidence="3">N-(2-amino-2-carboxyethyl)-L-glutamate synthase</fullName>
        <shortName evidence="3">ACEGA synthase</shortName>
        <ecNumber evidence="1">2.5.1.140</ecNumber>
    </recommendedName>
</protein>
<proteinExistence type="inferred from homology"/>
<keyword id="KW-0663">Pyridoxal phosphate</keyword>
<keyword id="KW-0808">Transferase</keyword>
<sequence>MIEKSQACHDSLLDSVGQTPMVQLHQLFPKHEVFAKLEYMNPGGSMKDRPAKYIIEHGIKHGLITENTHLIESTSGNLGIALAMIAKIKGLKLTCVVDPKISPTNLKIIKSYGANVEMVEEPDAHGGYLMTRIAKVQELLATIDDAYWINQYANELNWQSHYHGAGTEIVETIKQPIDYFVAPVSTTGSIMGMSRKIKEVHPNAQIVAVDAKGSVIFGDKPINRELPGIGASRVPEILNRSEINQVIHVDDYQSALGCRKLIDYEGIFAGGSTGSIIAAIEQLITSIEEGATIVTILPDRGDRYLDLVYSDTWLEKMKSRQGVKSE</sequence>